<evidence type="ECO:0000255" key="1">
    <source>
        <dbReference type="HAMAP-Rule" id="MF_00121"/>
    </source>
</evidence>
<proteinExistence type="inferred from homology"/>
<keyword id="KW-0067">ATP-binding</keyword>
<keyword id="KW-0436">Ligase</keyword>
<keyword id="KW-0547">Nucleotide-binding</keyword>
<keyword id="KW-0648">Protein biosynthesis</keyword>
<keyword id="KW-1185">Reference proteome</keyword>
<sequence length="503" mass="54306">MAMSAPTVELMDYADVVARYEPVLGMEVHVELSTATKMFCGCPTDFGAEPNTQVCPVCLGLPGSLPVVNEKAVESAIRIGLALNCSITPWGRFARKNYFYPDQPKNYQISQYDEPIATDGHLDVVLDDGSVFRVDIERAHMEEDTGKSVHVGGATGRIHGASHSLLDYNRAGVPLIEIVTKPITGAGERAPEVARAYVTALRDLLKSLGVSDVKMEQGSLRCDANVSLMPVGASEFGTRTETKNVNSLKSVEVAVRYEMRRQAAVLAAGGAIVQETRHFHESDGTTSPGRRKETAEDYRYFPEPDLEPIAPSPEWIEELRATIPEYPWLRRARIQQEWGVSDEVMRDVVNAGALDLIIATVEAGAPANEARSWWVAYLSEKAKERGVALDELPITPAQVAEVVKLVESKTVNSKVAKQVVDFVLAGEGEPAAVVEAKGLGMVSDDSALQAEVEKALAANPDIADKIRAGKVQAAGKIVGDVMKATRGQADAARVRELVLAACS</sequence>
<dbReference type="EC" id="6.3.5.-" evidence="1"/>
<dbReference type="EMBL" id="AP006618">
    <property type="protein sequence ID" value="BAD59087.1"/>
    <property type="molecule type" value="Genomic_DNA"/>
</dbReference>
<dbReference type="SMR" id="Q5YRV4"/>
<dbReference type="STRING" id="247156.NFA_42380"/>
<dbReference type="KEGG" id="nfa:NFA_42380"/>
<dbReference type="eggNOG" id="COG0064">
    <property type="taxonomic scope" value="Bacteria"/>
</dbReference>
<dbReference type="HOGENOM" id="CLU_019240_0_0_11"/>
<dbReference type="OrthoDB" id="9804078at2"/>
<dbReference type="Proteomes" id="UP000006820">
    <property type="component" value="Chromosome"/>
</dbReference>
<dbReference type="GO" id="GO:0050566">
    <property type="term" value="F:asparaginyl-tRNA synthase (glutamine-hydrolyzing) activity"/>
    <property type="evidence" value="ECO:0007669"/>
    <property type="project" value="RHEA"/>
</dbReference>
<dbReference type="GO" id="GO:0005524">
    <property type="term" value="F:ATP binding"/>
    <property type="evidence" value="ECO:0007669"/>
    <property type="project" value="UniProtKB-KW"/>
</dbReference>
<dbReference type="GO" id="GO:0050567">
    <property type="term" value="F:glutaminyl-tRNA synthase (glutamine-hydrolyzing) activity"/>
    <property type="evidence" value="ECO:0007669"/>
    <property type="project" value="UniProtKB-UniRule"/>
</dbReference>
<dbReference type="GO" id="GO:0070681">
    <property type="term" value="P:glutaminyl-tRNAGln biosynthesis via transamidation"/>
    <property type="evidence" value="ECO:0007669"/>
    <property type="project" value="TreeGrafter"/>
</dbReference>
<dbReference type="GO" id="GO:0006412">
    <property type="term" value="P:translation"/>
    <property type="evidence" value="ECO:0007669"/>
    <property type="project" value="UniProtKB-UniRule"/>
</dbReference>
<dbReference type="FunFam" id="1.10.10.410:FF:000002">
    <property type="entry name" value="Aspartyl/glutamyl-tRNA(Asn/Gln) amidotransferase subunit B"/>
    <property type="match status" value="1"/>
</dbReference>
<dbReference type="Gene3D" id="1.10.10.410">
    <property type="match status" value="1"/>
</dbReference>
<dbReference type="HAMAP" id="MF_00121">
    <property type="entry name" value="GatB"/>
    <property type="match status" value="1"/>
</dbReference>
<dbReference type="InterPro" id="IPR017959">
    <property type="entry name" value="Asn/Gln-tRNA_amidoTrfase_suB/E"/>
</dbReference>
<dbReference type="InterPro" id="IPR006075">
    <property type="entry name" value="Asn/Gln-tRNA_Trfase_suB/E_cat"/>
</dbReference>
<dbReference type="InterPro" id="IPR018027">
    <property type="entry name" value="Asn/Gln_amidotransferase"/>
</dbReference>
<dbReference type="InterPro" id="IPR003789">
    <property type="entry name" value="Asn/Gln_tRNA_amidoTrase-B-like"/>
</dbReference>
<dbReference type="InterPro" id="IPR004413">
    <property type="entry name" value="GatB"/>
</dbReference>
<dbReference type="InterPro" id="IPR023168">
    <property type="entry name" value="GatB_Yqey_C_2"/>
</dbReference>
<dbReference type="InterPro" id="IPR017958">
    <property type="entry name" value="Gln-tRNA_amidoTrfase_suB_CS"/>
</dbReference>
<dbReference type="InterPro" id="IPR014746">
    <property type="entry name" value="Gln_synth/guanido_kin_cat_dom"/>
</dbReference>
<dbReference type="NCBIfam" id="TIGR00133">
    <property type="entry name" value="gatB"/>
    <property type="match status" value="1"/>
</dbReference>
<dbReference type="NCBIfam" id="NF004012">
    <property type="entry name" value="PRK05477.1-2"/>
    <property type="match status" value="1"/>
</dbReference>
<dbReference type="NCBIfam" id="NF004013">
    <property type="entry name" value="PRK05477.1-3"/>
    <property type="match status" value="1"/>
</dbReference>
<dbReference type="NCBIfam" id="NF004014">
    <property type="entry name" value="PRK05477.1-4"/>
    <property type="match status" value="1"/>
</dbReference>
<dbReference type="PANTHER" id="PTHR11659">
    <property type="entry name" value="GLUTAMYL-TRNA GLN AMIDOTRANSFERASE SUBUNIT B MITOCHONDRIAL AND PROKARYOTIC PET112-RELATED"/>
    <property type="match status" value="1"/>
</dbReference>
<dbReference type="PANTHER" id="PTHR11659:SF0">
    <property type="entry name" value="GLUTAMYL-TRNA(GLN) AMIDOTRANSFERASE SUBUNIT B, MITOCHONDRIAL"/>
    <property type="match status" value="1"/>
</dbReference>
<dbReference type="Pfam" id="PF02934">
    <property type="entry name" value="GatB_N"/>
    <property type="match status" value="1"/>
</dbReference>
<dbReference type="Pfam" id="PF02637">
    <property type="entry name" value="GatB_Yqey"/>
    <property type="match status" value="1"/>
</dbReference>
<dbReference type="SMART" id="SM00845">
    <property type="entry name" value="GatB_Yqey"/>
    <property type="match status" value="1"/>
</dbReference>
<dbReference type="SUPFAM" id="SSF89095">
    <property type="entry name" value="GatB/YqeY motif"/>
    <property type="match status" value="1"/>
</dbReference>
<dbReference type="SUPFAM" id="SSF55931">
    <property type="entry name" value="Glutamine synthetase/guanido kinase"/>
    <property type="match status" value="1"/>
</dbReference>
<dbReference type="PROSITE" id="PS01234">
    <property type="entry name" value="GATB"/>
    <property type="match status" value="1"/>
</dbReference>
<feature type="chain" id="PRO_0000241248" description="Aspartyl/glutamyl-tRNA(Asn/Gln) amidotransferase subunit B">
    <location>
        <begin position="1"/>
        <end position="503"/>
    </location>
</feature>
<accession>Q5YRV4</accession>
<reference key="1">
    <citation type="journal article" date="2004" name="Proc. Natl. Acad. Sci. U.S.A.">
        <title>The complete genomic sequence of Nocardia farcinica IFM 10152.</title>
        <authorList>
            <person name="Ishikawa J."/>
            <person name="Yamashita A."/>
            <person name="Mikami Y."/>
            <person name="Hoshino Y."/>
            <person name="Kurita H."/>
            <person name="Hotta K."/>
            <person name="Shiba T."/>
            <person name="Hattori M."/>
        </authorList>
    </citation>
    <scope>NUCLEOTIDE SEQUENCE [LARGE SCALE GENOMIC DNA]</scope>
    <source>
        <strain>IFM 10152</strain>
    </source>
</reference>
<name>GATB_NOCFA</name>
<comment type="function">
    <text evidence="1">Allows the formation of correctly charged Asn-tRNA(Asn) or Gln-tRNA(Gln) through the transamidation of misacylated Asp-tRNA(Asn) or Glu-tRNA(Gln) in organisms which lack either or both of asparaginyl-tRNA or glutaminyl-tRNA synthetases. The reaction takes place in the presence of glutamine and ATP through an activated phospho-Asp-tRNA(Asn) or phospho-Glu-tRNA(Gln).</text>
</comment>
<comment type="catalytic activity">
    <reaction evidence="1">
        <text>L-glutamyl-tRNA(Gln) + L-glutamine + ATP + H2O = L-glutaminyl-tRNA(Gln) + L-glutamate + ADP + phosphate + H(+)</text>
        <dbReference type="Rhea" id="RHEA:17521"/>
        <dbReference type="Rhea" id="RHEA-COMP:9681"/>
        <dbReference type="Rhea" id="RHEA-COMP:9684"/>
        <dbReference type="ChEBI" id="CHEBI:15377"/>
        <dbReference type="ChEBI" id="CHEBI:15378"/>
        <dbReference type="ChEBI" id="CHEBI:29985"/>
        <dbReference type="ChEBI" id="CHEBI:30616"/>
        <dbReference type="ChEBI" id="CHEBI:43474"/>
        <dbReference type="ChEBI" id="CHEBI:58359"/>
        <dbReference type="ChEBI" id="CHEBI:78520"/>
        <dbReference type="ChEBI" id="CHEBI:78521"/>
        <dbReference type="ChEBI" id="CHEBI:456216"/>
    </reaction>
</comment>
<comment type="catalytic activity">
    <reaction evidence="1">
        <text>L-aspartyl-tRNA(Asn) + L-glutamine + ATP + H2O = L-asparaginyl-tRNA(Asn) + L-glutamate + ADP + phosphate + 2 H(+)</text>
        <dbReference type="Rhea" id="RHEA:14513"/>
        <dbReference type="Rhea" id="RHEA-COMP:9674"/>
        <dbReference type="Rhea" id="RHEA-COMP:9677"/>
        <dbReference type="ChEBI" id="CHEBI:15377"/>
        <dbReference type="ChEBI" id="CHEBI:15378"/>
        <dbReference type="ChEBI" id="CHEBI:29985"/>
        <dbReference type="ChEBI" id="CHEBI:30616"/>
        <dbReference type="ChEBI" id="CHEBI:43474"/>
        <dbReference type="ChEBI" id="CHEBI:58359"/>
        <dbReference type="ChEBI" id="CHEBI:78515"/>
        <dbReference type="ChEBI" id="CHEBI:78516"/>
        <dbReference type="ChEBI" id="CHEBI:456216"/>
    </reaction>
</comment>
<comment type="subunit">
    <text evidence="1">Heterotrimer of A, B and C subunits.</text>
</comment>
<comment type="similarity">
    <text evidence="1">Belongs to the GatB/GatE family. GatB subfamily.</text>
</comment>
<gene>
    <name evidence="1" type="primary">gatB</name>
    <name type="ordered locus">NFA_42380</name>
</gene>
<protein>
    <recommendedName>
        <fullName evidence="1">Aspartyl/glutamyl-tRNA(Asn/Gln) amidotransferase subunit B</fullName>
        <shortName evidence="1">Asp/Glu-ADT subunit B</shortName>
        <ecNumber evidence="1">6.3.5.-</ecNumber>
    </recommendedName>
</protein>
<organism>
    <name type="scientific">Nocardia farcinica (strain IFM 10152)</name>
    <dbReference type="NCBI Taxonomy" id="247156"/>
    <lineage>
        <taxon>Bacteria</taxon>
        <taxon>Bacillati</taxon>
        <taxon>Actinomycetota</taxon>
        <taxon>Actinomycetes</taxon>
        <taxon>Mycobacteriales</taxon>
        <taxon>Nocardiaceae</taxon>
        <taxon>Nocardia</taxon>
    </lineage>
</organism>